<keyword id="KW-0067">ATP-binding</keyword>
<keyword id="KW-0963">Cytoplasm</keyword>
<keyword id="KW-0227">DNA damage</keyword>
<keyword id="KW-0228">DNA excision</keyword>
<keyword id="KW-0234">DNA repair</keyword>
<keyword id="KW-0238">DNA-binding</keyword>
<keyword id="KW-0267">Excision nuclease</keyword>
<keyword id="KW-0479">Metal-binding</keyword>
<keyword id="KW-0547">Nucleotide-binding</keyword>
<keyword id="KW-0677">Repeat</keyword>
<keyword id="KW-0742">SOS response</keyword>
<keyword id="KW-0862">Zinc</keyword>
<keyword id="KW-0863">Zinc-finger</keyword>
<accession>Q8YHC4</accession>
<sequence length="974" mass="107496">MSDQKFISIRGAREHNLKNVDLDLPRDKLIVMTGLSGSGKSSLAFDTIYAEGQRRYVESLSAYARQFLEMMQKPDVDQIDGLSPAISIEQKTTSRNPRSTVGTVTEIYDYMRLLFARVGIPYSPATGLPIESQTVSQMVDRVIALEEGTRLYILAPIVRGRKGEYRKELAELQKKGFQRVKVDGTFYEIADVPPLDKKYKHDIDVVVDRVVVRPDLSTRLADSLETCLKLADGLAIAEFADKPLPVGETAEGGSANKSANETHERILFSEKFACPVSGFTIPEIEPRLFSFNNPFGACPTCDGLGTQQAIDPNLIIPDESAALKDGAVAPWARSSSPYYNQTLEALGKAYGFKVSARWSELSEEARQAILYGTKGREITFHYDDGLRSYQTTKPFEGVIPNLERRWKETDSAWSREEIERFMASTPCPACNGYRLKPEALSVKIGKKHIGEITEMSIRKADAWFRDIDGSFNEKQREIAARILKEIRERLQFLNDVGLDYLTLARNSGTLSGGESQRIRLASQIGSGLTGVLYVLDEPSIGLHQRDNARLLDTLRHLRDLGNTVIVVEHDEDAILTADYVVDIGPAAGVHGGKVIAQGSPQDIMANTNSLTGKYLSGAMEVAVPAERRKISKTKRLRVVGARGNNLKNVSADIPLGTFTAVTGVSGGGKSTFLIETLFKAASRRIMGSREHPAEHDRIEGLEFLDKVIDIDQSPIGRTPRSNPATYTGAFTPIRDWFAGLPEAKARGYQPGRFSFNIKGGRCEACQGDGVIKIEMHFLPDVYVTCDVCHGKRYNRETLDVLFKGKSIADVLDMTVEEGAEFFSAVPAVRDKLETLVKVGLGYIKVGQQATTLSGGEAQRVKLAKELSRRATGRTLYILDEPTTGLHFHDVAKLLEVLHELVEQGNTVVVIEHNLEVIKTADWVIDLGPEGGDGGGEIVAVGRPEDIVQEKRSYTGQFLKELLERRPKRSSQAAE</sequence>
<proteinExistence type="inferred from homology"/>
<protein>
    <recommendedName>
        <fullName evidence="1">UvrABC system protein A</fullName>
        <shortName evidence="1">UvrA protein</shortName>
    </recommendedName>
    <alternativeName>
        <fullName evidence="1">Excinuclease ABC subunit A</fullName>
    </alternativeName>
</protein>
<gene>
    <name evidence="1" type="primary">uvrA</name>
    <name type="ordered locus">BMEI0878</name>
</gene>
<feature type="chain" id="PRO_0000093040" description="UvrABC system protein A">
    <location>
        <begin position="1"/>
        <end position="974"/>
    </location>
</feature>
<feature type="domain" description="ABC transporter 1" evidence="1">
    <location>
        <begin position="331"/>
        <end position="610"/>
    </location>
</feature>
<feature type="domain" description="ABC transporter 2" evidence="1">
    <location>
        <begin position="630"/>
        <end position="959"/>
    </location>
</feature>
<feature type="zinc finger region" description="C4-type" evidence="1">
    <location>
        <begin position="762"/>
        <end position="788"/>
    </location>
</feature>
<feature type="binding site" evidence="1">
    <location>
        <begin position="34"/>
        <end position="41"/>
    </location>
    <ligand>
        <name>ATP</name>
        <dbReference type="ChEBI" id="CHEBI:30616"/>
    </ligand>
</feature>
<feature type="binding site" evidence="1">
    <location>
        <begin position="663"/>
        <end position="670"/>
    </location>
    <ligand>
        <name>ATP</name>
        <dbReference type="ChEBI" id="CHEBI:30616"/>
    </ligand>
</feature>
<evidence type="ECO:0000255" key="1">
    <source>
        <dbReference type="HAMAP-Rule" id="MF_00205"/>
    </source>
</evidence>
<name>UVRA_BRUME</name>
<reference key="1">
    <citation type="journal article" date="2002" name="Proc. Natl. Acad. Sci. U.S.A.">
        <title>The genome sequence of the facultative intracellular pathogen Brucella melitensis.</title>
        <authorList>
            <person name="DelVecchio V.G."/>
            <person name="Kapatral V."/>
            <person name="Redkar R.J."/>
            <person name="Patra G."/>
            <person name="Mujer C."/>
            <person name="Los T."/>
            <person name="Ivanova N."/>
            <person name="Anderson I."/>
            <person name="Bhattacharyya A."/>
            <person name="Lykidis A."/>
            <person name="Reznik G."/>
            <person name="Jablonski L."/>
            <person name="Larsen N."/>
            <person name="D'Souza M."/>
            <person name="Bernal A."/>
            <person name="Mazur M."/>
            <person name="Goltsman E."/>
            <person name="Selkov E."/>
            <person name="Elzer P.H."/>
            <person name="Hagius S."/>
            <person name="O'Callaghan D."/>
            <person name="Letesson J.-J."/>
            <person name="Haselkorn R."/>
            <person name="Kyrpides N.C."/>
            <person name="Overbeek R."/>
        </authorList>
    </citation>
    <scope>NUCLEOTIDE SEQUENCE [LARGE SCALE GENOMIC DNA]</scope>
    <source>
        <strain>ATCC 23456 / CCUG 17765 / NCTC 10094 / 16M</strain>
    </source>
</reference>
<comment type="function">
    <text evidence="1">The UvrABC repair system catalyzes the recognition and processing of DNA lesions. UvrA is an ATPase and a DNA-binding protein. A damage recognition complex composed of 2 UvrA and 2 UvrB subunits scans DNA for abnormalities. When the presence of a lesion has been verified by UvrB, the UvrA molecules dissociate.</text>
</comment>
<comment type="subunit">
    <text evidence="1">Forms a heterotetramer with UvrB during the search for lesions.</text>
</comment>
<comment type="subcellular location">
    <subcellularLocation>
        <location evidence="1">Cytoplasm</location>
    </subcellularLocation>
</comment>
<comment type="similarity">
    <text evidence="1">Belongs to the ABC transporter superfamily. UvrA family.</text>
</comment>
<dbReference type="EMBL" id="AE008917">
    <property type="protein sequence ID" value="AAL52059.1"/>
    <property type="molecule type" value="Genomic_DNA"/>
</dbReference>
<dbReference type="PIR" id="AH3361">
    <property type="entry name" value="AH3361"/>
</dbReference>
<dbReference type="RefSeq" id="WP_004683828.1">
    <property type="nucleotide sequence ID" value="NC_003317.1"/>
</dbReference>
<dbReference type="SMR" id="Q8YHC4"/>
<dbReference type="GeneID" id="29593693"/>
<dbReference type="KEGG" id="bme:BMEI0878"/>
<dbReference type="KEGG" id="bmel:DK63_544"/>
<dbReference type="PATRIC" id="fig|224914.52.peg.566"/>
<dbReference type="eggNOG" id="COG0178">
    <property type="taxonomic scope" value="Bacteria"/>
</dbReference>
<dbReference type="PhylomeDB" id="Q8YHC4"/>
<dbReference type="Proteomes" id="UP000000419">
    <property type="component" value="Chromosome I"/>
</dbReference>
<dbReference type="GO" id="GO:0005737">
    <property type="term" value="C:cytoplasm"/>
    <property type="evidence" value="ECO:0007669"/>
    <property type="project" value="UniProtKB-SubCell"/>
</dbReference>
<dbReference type="GO" id="GO:0009380">
    <property type="term" value="C:excinuclease repair complex"/>
    <property type="evidence" value="ECO:0007669"/>
    <property type="project" value="InterPro"/>
</dbReference>
<dbReference type="GO" id="GO:0005524">
    <property type="term" value="F:ATP binding"/>
    <property type="evidence" value="ECO:0007669"/>
    <property type="project" value="UniProtKB-UniRule"/>
</dbReference>
<dbReference type="GO" id="GO:0016887">
    <property type="term" value="F:ATP hydrolysis activity"/>
    <property type="evidence" value="ECO:0007669"/>
    <property type="project" value="InterPro"/>
</dbReference>
<dbReference type="GO" id="GO:0003677">
    <property type="term" value="F:DNA binding"/>
    <property type="evidence" value="ECO:0007669"/>
    <property type="project" value="UniProtKB-UniRule"/>
</dbReference>
<dbReference type="GO" id="GO:0009381">
    <property type="term" value="F:excinuclease ABC activity"/>
    <property type="evidence" value="ECO:0007669"/>
    <property type="project" value="UniProtKB-UniRule"/>
</dbReference>
<dbReference type="GO" id="GO:0008270">
    <property type="term" value="F:zinc ion binding"/>
    <property type="evidence" value="ECO:0007669"/>
    <property type="project" value="UniProtKB-UniRule"/>
</dbReference>
<dbReference type="GO" id="GO:0006289">
    <property type="term" value="P:nucleotide-excision repair"/>
    <property type="evidence" value="ECO:0007669"/>
    <property type="project" value="UniProtKB-UniRule"/>
</dbReference>
<dbReference type="GO" id="GO:0009432">
    <property type="term" value="P:SOS response"/>
    <property type="evidence" value="ECO:0007669"/>
    <property type="project" value="UniProtKB-UniRule"/>
</dbReference>
<dbReference type="CDD" id="cd03270">
    <property type="entry name" value="ABC_UvrA_I"/>
    <property type="match status" value="1"/>
</dbReference>
<dbReference type="CDD" id="cd03271">
    <property type="entry name" value="ABC_UvrA_II"/>
    <property type="match status" value="1"/>
</dbReference>
<dbReference type="FunFam" id="1.20.1580.10:FF:000002">
    <property type="entry name" value="UvrABC system protein A"/>
    <property type="match status" value="1"/>
</dbReference>
<dbReference type="Gene3D" id="1.10.8.280">
    <property type="entry name" value="ABC transporter ATPase domain-like"/>
    <property type="match status" value="1"/>
</dbReference>
<dbReference type="Gene3D" id="1.20.1580.10">
    <property type="entry name" value="ABC transporter ATPase like domain"/>
    <property type="match status" value="2"/>
</dbReference>
<dbReference type="Gene3D" id="3.30.1490.20">
    <property type="entry name" value="ATP-grasp fold, A domain"/>
    <property type="match status" value="1"/>
</dbReference>
<dbReference type="Gene3D" id="3.40.50.300">
    <property type="entry name" value="P-loop containing nucleotide triphosphate hydrolases"/>
    <property type="match status" value="2"/>
</dbReference>
<dbReference type="HAMAP" id="MF_00205">
    <property type="entry name" value="UvrA"/>
    <property type="match status" value="1"/>
</dbReference>
<dbReference type="InterPro" id="IPR003439">
    <property type="entry name" value="ABC_transporter-like_ATP-bd"/>
</dbReference>
<dbReference type="InterPro" id="IPR017871">
    <property type="entry name" value="ABC_transporter-like_CS"/>
</dbReference>
<dbReference type="InterPro" id="IPR013815">
    <property type="entry name" value="ATP_grasp_subdomain_1"/>
</dbReference>
<dbReference type="InterPro" id="IPR027417">
    <property type="entry name" value="P-loop_NTPase"/>
</dbReference>
<dbReference type="InterPro" id="IPR004602">
    <property type="entry name" value="UvrA"/>
</dbReference>
<dbReference type="InterPro" id="IPR041552">
    <property type="entry name" value="UvrA_DNA-bd"/>
</dbReference>
<dbReference type="InterPro" id="IPR041102">
    <property type="entry name" value="UvrA_inter"/>
</dbReference>
<dbReference type="NCBIfam" id="NF001503">
    <property type="entry name" value="PRK00349.1"/>
    <property type="match status" value="1"/>
</dbReference>
<dbReference type="NCBIfam" id="TIGR00630">
    <property type="entry name" value="uvra"/>
    <property type="match status" value="1"/>
</dbReference>
<dbReference type="PANTHER" id="PTHR43152">
    <property type="entry name" value="UVRABC SYSTEM PROTEIN A"/>
    <property type="match status" value="1"/>
</dbReference>
<dbReference type="PANTHER" id="PTHR43152:SF3">
    <property type="entry name" value="UVRABC SYSTEM PROTEIN A"/>
    <property type="match status" value="1"/>
</dbReference>
<dbReference type="Pfam" id="PF17755">
    <property type="entry name" value="UvrA_DNA-bind"/>
    <property type="match status" value="1"/>
</dbReference>
<dbReference type="Pfam" id="PF17760">
    <property type="entry name" value="UvrA_inter"/>
    <property type="match status" value="1"/>
</dbReference>
<dbReference type="SUPFAM" id="SSF52540">
    <property type="entry name" value="P-loop containing nucleoside triphosphate hydrolases"/>
    <property type="match status" value="2"/>
</dbReference>
<dbReference type="PROSITE" id="PS00211">
    <property type="entry name" value="ABC_TRANSPORTER_1"/>
    <property type="match status" value="2"/>
</dbReference>
<dbReference type="PROSITE" id="PS50893">
    <property type="entry name" value="ABC_TRANSPORTER_2"/>
    <property type="match status" value="1"/>
</dbReference>
<organism>
    <name type="scientific">Brucella melitensis biotype 1 (strain ATCC 23456 / CCUG 17765 / NCTC 10094 / 16M)</name>
    <dbReference type="NCBI Taxonomy" id="224914"/>
    <lineage>
        <taxon>Bacteria</taxon>
        <taxon>Pseudomonadati</taxon>
        <taxon>Pseudomonadota</taxon>
        <taxon>Alphaproteobacteria</taxon>
        <taxon>Hyphomicrobiales</taxon>
        <taxon>Brucellaceae</taxon>
        <taxon>Brucella/Ochrobactrum group</taxon>
        <taxon>Brucella</taxon>
    </lineage>
</organism>